<name>Y12C_BPT4</name>
<reference key="1">
    <citation type="submission" date="1995-05" db="EMBL/GenBank/DDBJ databases">
        <authorList>
            <person name="Poglazov A."/>
            <person name="Porter D."/>
            <person name="Mesyanzhinov V.V."/>
            <person name="Kutter E.M."/>
        </authorList>
    </citation>
    <scope>NUCLEOTIDE SEQUENCE [GENOMIC DNA]</scope>
</reference>
<reference key="2">
    <citation type="journal article" date="2003" name="Microbiol. Mol. Biol. Rev.">
        <title>Bacteriophage T4 genome.</title>
        <authorList>
            <person name="Miller E.S."/>
            <person name="Kutter E."/>
            <person name="Mosig G."/>
            <person name="Arisaka F."/>
            <person name="Kunisawa T."/>
            <person name="Ruger W."/>
        </authorList>
    </citation>
    <scope>NUCLEOTIDE SEQUENCE [LARGE SCALE GENOMIC DNA]</scope>
</reference>
<feature type="chain" id="PRO_0000165163" description="Uncharacterized 6.6 kDa protein in Gp54-alt intergenic region">
    <location>
        <begin position="1"/>
        <end position="61"/>
    </location>
</feature>
<sequence>MELITELFDGASAPVVTLNPKHKIPQIFAIQAGEESVLPGFRFCTYTSGGDTNKTLNQAIK</sequence>
<organism>
    <name type="scientific">Enterobacteria phage T4</name>
    <name type="common">Bacteriophage T4</name>
    <dbReference type="NCBI Taxonomy" id="10665"/>
    <lineage>
        <taxon>Viruses</taxon>
        <taxon>Duplodnaviria</taxon>
        <taxon>Heunggongvirae</taxon>
        <taxon>Uroviricota</taxon>
        <taxon>Caudoviricetes</taxon>
        <taxon>Straboviridae</taxon>
        <taxon>Tevenvirinae</taxon>
        <taxon>Tequatrovirus</taxon>
    </lineage>
</organism>
<dbReference type="EMBL" id="U27100">
    <property type="protein sequence ID" value="AAA75318.1"/>
    <property type="molecule type" value="Genomic_DNA"/>
</dbReference>
<dbReference type="EMBL" id="AF158101">
    <property type="protein sequence ID" value="AAD42534.1"/>
    <property type="molecule type" value="Genomic_DNA"/>
</dbReference>
<dbReference type="RefSeq" id="NP_049810.1">
    <property type="nucleotide sequence ID" value="NC_000866.4"/>
</dbReference>
<dbReference type="GeneID" id="1258764"/>
<dbReference type="KEGG" id="vg:1258764"/>
<dbReference type="OrthoDB" id="1983at10239"/>
<dbReference type="Proteomes" id="UP000009087">
    <property type="component" value="Segment"/>
</dbReference>
<proteinExistence type="predicted"/>
<gene>
    <name type="primary">y12C</name>
    <name type="synonym">alt.-1</name>
</gene>
<organismHost>
    <name type="scientific">Escherichia coli</name>
    <dbReference type="NCBI Taxonomy" id="562"/>
</organismHost>
<keyword id="KW-1185">Reference proteome</keyword>
<protein>
    <recommendedName>
        <fullName>Uncharacterized 6.6 kDa protein in Gp54-alt intergenic region</fullName>
    </recommendedName>
</protein>
<accession>P39495</accession>